<feature type="initiator methionine" description="Removed" evidence="5">
    <location>
        <position position="1"/>
    </location>
</feature>
<feature type="chain" id="PRO_0000134346" description="Small ribosomal subunit protein uS2z">
    <location>
        <begin position="2"/>
        <end position="298"/>
    </location>
</feature>
<feature type="region of interest" description="Disordered" evidence="2">
    <location>
        <begin position="252"/>
        <end position="298"/>
    </location>
</feature>
<feature type="compositionally biased region" description="Low complexity" evidence="2">
    <location>
        <begin position="263"/>
        <end position="298"/>
    </location>
</feature>
<feature type="modified residue" description="N-acetylalanine" evidence="5">
    <location>
        <position position="2"/>
    </location>
</feature>
<feature type="sequence conflict" description="In Ref. 1, 3 and 4." evidence="4" ref="1 3 4">
    <original>QL</original>
    <variation>HV</variation>
    <location>
        <begin position="11"/>
        <end position="12"/>
    </location>
</feature>
<feature type="sequence conflict" description="In Ref. 1; CAA48794." evidence="4" ref="1">
    <original>P</original>
    <variation>L</variation>
    <location>
        <position position="211"/>
    </location>
</feature>
<feature type="sequence conflict" description="In Ref. 3 and 4." evidence="4" ref="3 4">
    <original>EE</original>
    <variation>DY</variation>
    <location>
        <begin position="212"/>
        <end position="213"/>
    </location>
</feature>
<organism>
    <name type="scientific">Arabidopsis thaliana</name>
    <name type="common">Mouse-ear cress</name>
    <dbReference type="NCBI Taxonomy" id="3702"/>
    <lineage>
        <taxon>Eukaryota</taxon>
        <taxon>Viridiplantae</taxon>
        <taxon>Streptophyta</taxon>
        <taxon>Embryophyta</taxon>
        <taxon>Tracheophyta</taxon>
        <taxon>Spermatophyta</taxon>
        <taxon>Magnoliopsida</taxon>
        <taxon>eudicotyledons</taxon>
        <taxon>Gunneridae</taxon>
        <taxon>Pentapetalae</taxon>
        <taxon>rosids</taxon>
        <taxon>malvids</taxon>
        <taxon>Brassicales</taxon>
        <taxon>Brassicaceae</taxon>
        <taxon>Camelineae</taxon>
        <taxon>Arabidopsis</taxon>
    </lineage>
</organism>
<proteinExistence type="evidence at protein level"/>
<gene>
    <name type="primary">RPSaA</name>
    <name type="ordered locus">At1g72370</name>
    <name type="ORF">T10D10.16</name>
</gene>
<reference key="1">
    <citation type="journal article" date="1993" name="Plant Physiol.">
        <title>An Arabidopsis cDNA encoding a 33-kilodalton laminin receptor homolog.</title>
        <authorList>
            <person name="Axelos M."/>
            <person name="Bardet C."/>
            <person name="Lescure B."/>
        </authorList>
    </citation>
    <scope>NUCLEOTIDE SEQUENCE [MRNA]</scope>
    <source>
        <strain>cv. Columbia</strain>
    </source>
</reference>
<reference key="2">
    <citation type="journal article" date="1994" name="J. Biol. Chem.">
        <title>Arabidopsis p40 homologue. A novel acidic protein associated with the 40 S subunit of ribosomes.</title>
        <authorList>
            <person name="Garcia-Hernandez M."/>
            <person name="Davies E."/>
            <person name="Staswick P.E."/>
        </authorList>
    </citation>
    <scope>NUCLEOTIDE SEQUENCE [MRNA]</scope>
    <source>
        <strain>cv. Columbia</strain>
        <tissue>Leaf</tissue>
    </source>
</reference>
<reference key="3">
    <citation type="journal article" date="1996" name="Plant Physiol. Biochem.">
        <title>Characterization of a ribosomal p40 homologue gene showing the same pattern of expression as the elongation factor-1 alpha in Arabidopsis thaliana.</title>
        <authorList>
            <person name="Scheer I."/>
            <person name="Axelos M."/>
            <person name="Pont-Lezica R.F."/>
        </authorList>
    </citation>
    <scope>NUCLEOTIDE SEQUENCE [GENOMIC DNA]</scope>
    <source>
        <strain>cv. Columbia</strain>
    </source>
</reference>
<reference key="4">
    <citation type="journal article" date="1997" name="Plant Mol. Biol.">
        <title>Expression of a gene encoding a ribosomal p40 protein and identification of an active promoter site.</title>
        <authorList>
            <person name="Scheer I."/>
            <person name="Ludevid M.D."/>
            <person name="Regad F.F."/>
            <person name="Lescure B."/>
            <person name="Pont-Lezica R.F."/>
        </authorList>
    </citation>
    <scope>NUCLEOTIDE SEQUENCE [GENOMIC DNA]</scope>
    <source>
        <strain>cv. Columbia</strain>
    </source>
</reference>
<reference key="5">
    <citation type="journal article" date="2000" name="Nature">
        <title>Sequence and analysis of chromosome 1 of the plant Arabidopsis thaliana.</title>
        <authorList>
            <person name="Theologis A."/>
            <person name="Ecker J.R."/>
            <person name="Palm C.J."/>
            <person name="Federspiel N.A."/>
            <person name="Kaul S."/>
            <person name="White O."/>
            <person name="Alonso J."/>
            <person name="Altafi H."/>
            <person name="Araujo R."/>
            <person name="Bowman C.L."/>
            <person name="Brooks S.Y."/>
            <person name="Buehler E."/>
            <person name="Chan A."/>
            <person name="Chao Q."/>
            <person name="Chen H."/>
            <person name="Cheuk R.F."/>
            <person name="Chin C.W."/>
            <person name="Chung M.K."/>
            <person name="Conn L."/>
            <person name="Conway A.B."/>
            <person name="Conway A.R."/>
            <person name="Creasy T.H."/>
            <person name="Dewar K."/>
            <person name="Dunn P."/>
            <person name="Etgu P."/>
            <person name="Feldblyum T.V."/>
            <person name="Feng J.-D."/>
            <person name="Fong B."/>
            <person name="Fujii C.Y."/>
            <person name="Gill J.E."/>
            <person name="Goldsmith A.D."/>
            <person name="Haas B."/>
            <person name="Hansen N.F."/>
            <person name="Hughes B."/>
            <person name="Huizar L."/>
            <person name="Hunter J.L."/>
            <person name="Jenkins J."/>
            <person name="Johnson-Hopson C."/>
            <person name="Khan S."/>
            <person name="Khaykin E."/>
            <person name="Kim C.J."/>
            <person name="Koo H.L."/>
            <person name="Kremenetskaia I."/>
            <person name="Kurtz D.B."/>
            <person name="Kwan A."/>
            <person name="Lam B."/>
            <person name="Langin-Hooper S."/>
            <person name="Lee A."/>
            <person name="Lee J.M."/>
            <person name="Lenz C.A."/>
            <person name="Li J.H."/>
            <person name="Li Y.-P."/>
            <person name="Lin X."/>
            <person name="Liu S.X."/>
            <person name="Liu Z.A."/>
            <person name="Luros J.S."/>
            <person name="Maiti R."/>
            <person name="Marziali A."/>
            <person name="Militscher J."/>
            <person name="Miranda M."/>
            <person name="Nguyen M."/>
            <person name="Nierman W.C."/>
            <person name="Osborne B.I."/>
            <person name="Pai G."/>
            <person name="Peterson J."/>
            <person name="Pham P.K."/>
            <person name="Rizzo M."/>
            <person name="Rooney T."/>
            <person name="Rowley D."/>
            <person name="Sakano H."/>
            <person name="Salzberg S.L."/>
            <person name="Schwartz J.R."/>
            <person name="Shinn P."/>
            <person name="Southwick A.M."/>
            <person name="Sun H."/>
            <person name="Tallon L.J."/>
            <person name="Tambunga G."/>
            <person name="Toriumi M.J."/>
            <person name="Town C.D."/>
            <person name="Utterback T."/>
            <person name="Van Aken S."/>
            <person name="Vaysberg M."/>
            <person name="Vysotskaia V.S."/>
            <person name="Walker M."/>
            <person name="Wu D."/>
            <person name="Yu G."/>
            <person name="Fraser C.M."/>
            <person name="Venter J.C."/>
            <person name="Davis R.W."/>
        </authorList>
    </citation>
    <scope>NUCLEOTIDE SEQUENCE [LARGE SCALE GENOMIC DNA]</scope>
    <source>
        <strain>cv. Columbia</strain>
    </source>
</reference>
<reference key="6">
    <citation type="journal article" date="2017" name="Plant J.">
        <title>Araport11: a complete reannotation of the Arabidopsis thaliana reference genome.</title>
        <authorList>
            <person name="Cheng C.Y."/>
            <person name="Krishnakumar V."/>
            <person name="Chan A.P."/>
            <person name="Thibaud-Nissen F."/>
            <person name="Schobel S."/>
            <person name="Town C.D."/>
        </authorList>
    </citation>
    <scope>GENOME REANNOTATION</scope>
    <source>
        <strain>cv. Columbia</strain>
    </source>
</reference>
<reference key="7">
    <citation type="journal article" date="2003" name="Science">
        <title>Empirical analysis of transcriptional activity in the Arabidopsis genome.</title>
        <authorList>
            <person name="Yamada K."/>
            <person name="Lim J."/>
            <person name="Dale J.M."/>
            <person name="Chen H."/>
            <person name="Shinn P."/>
            <person name="Palm C.J."/>
            <person name="Southwick A.M."/>
            <person name="Wu H.C."/>
            <person name="Kim C.J."/>
            <person name="Nguyen M."/>
            <person name="Pham P.K."/>
            <person name="Cheuk R.F."/>
            <person name="Karlin-Newmann G."/>
            <person name="Liu S.X."/>
            <person name="Lam B."/>
            <person name="Sakano H."/>
            <person name="Wu T."/>
            <person name="Yu G."/>
            <person name="Miranda M."/>
            <person name="Quach H.L."/>
            <person name="Tripp M."/>
            <person name="Chang C.H."/>
            <person name="Lee J.M."/>
            <person name="Toriumi M.J."/>
            <person name="Chan M.M."/>
            <person name="Tang C.C."/>
            <person name="Onodera C.S."/>
            <person name="Deng J.M."/>
            <person name="Akiyama K."/>
            <person name="Ansari Y."/>
            <person name="Arakawa T."/>
            <person name="Banh J."/>
            <person name="Banno F."/>
            <person name="Bowser L."/>
            <person name="Brooks S.Y."/>
            <person name="Carninci P."/>
            <person name="Chao Q."/>
            <person name="Choy N."/>
            <person name="Enju A."/>
            <person name="Goldsmith A.D."/>
            <person name="Gurjal M."/>
            <person name="Hansen N.F."/>
            <person name="Hayashizaki Y."/>
            <person name="Johnson-Hopson C."/>
            <person name="Hsuan V.W."/>
            <person name="Iida K."/>
            <person name="Karnes M."/>
            <person name="Khan S."/>
            <person name="Koesema E."/>
            <person name="Ishida J."/>
            <person name="Jiang P.X."/>
            <person name="Jones T."/>
            <person name="Kawai J."/>
            <person name="Kamiya A."/>
            <person name="Meyers C."/>
            <person name="Nakajima M."/>
            <person name="Narusaka M."/>
            <person name="Seki M."/>
            <person name="Sakurai T."/>
            <person name="Satou M."/>
            <person name="Tamse R."/>
            <person name="Vaysberg M."/>
            <person name="Wallender E.K."/>
            <person name="Wong C."/>
            <person name="Yamamura Y."/>
            <person name="Yuan S."/>
            <person name="Shinozaki K."/>
            <person name="Davis R.W."/>
            <person name="Theologis A."/>
            <person name="Ecker J.R."/>
        </authorList>
    </citation>
    <scope>NUCLEOTIDE SEQUENCE [LARGE SCALE MRNA]</scope>
    <source>
        <strain>cv. Columbia</strain>
    </source>
</reference>
<reference key="8">
    <citation type="submission" date="2002-03" db="EMBL/GenBank/DDBJ databases">
        <title>Full-length cDNA from Arabidopsis thaliana.</title>
        <authorList>
            <person name="Brover V.V."/>
            <person name="Troukhan M.E."/>
            <person name="Alexandrov N.A."/>
            <person name="Lu Y.-P."/>
            <person name="Flavell R.B."/>
            <person name="Feldmann K.A."/>
        </authorList>
    </citation>
    <scope>NUCLEOTIDE SEQUENCE [LARGE SCALE MRNA]</scope>
</reference>
<reference key="9">
    <citation type="journal article" date="2001" name="Plant Physiol.">
        <title>The organization of cytoplasmic ribosomal protein genes in the Arabidopsis genome.</title>
        <authorList>
            <person name="Barakat A."/>
            <person name="Szick-Miranda K."/>
            <person name="Chang I.-F."/>
            <person name="Guyot R."/>
            <person name="Blanc G."/>
            <person name="Cooke R."/>
            <person name="Delseny M."/>
            <person name="Bailey-Serres J."/>
        </authorList>
    </citation>
    <scope>GENE FAMILY ORGANIZATION</scope>
    <scope>NOMENCLATURE</scope>
</reference>
<reference key="10">
    <citation type="journal article" date="2007" name="Mol. Cell. Proteomics">
        <title>Multidimensional protein identification technology (MudPIT) analysis of ubiquitinated proteins in plants.</title>
        <authorList>
            <person name="Maor R."/>
            <person name="Jones A."/>
            <person name="Nuehse T.S."/>
            <person name="Studholme D.J."/>
            <person name="Peck S.C."/>
            <person name="Shirasu K."/>
        </authorList>
    </citation>
    <scope>IDENTIFICATION BY MASS SPECTROMETRY [LARGE SCALE ANALYSIS]</scope>
    <source>
        <strain>cv. Landsberg erecta</strain>
    </source>
</reference>
<reference key="11">
    <citation type="journal article" date="2012" name="Mol. Cell. Proteomics">
        <title>Comparative large-scale characterisation of plant vs. mammal proteins reveals similar and idiosyncratic N-alpha acetylation features.</title>
        <authorList>
            <person name="Bienvenut W.V."/>
            <person name="Sumpton D."/>
            <person name="Martinez A."/>
            <person name="Lilla S."/>
            <person name="Espagne C."/>
            <person name="Meinnel T."/>
            <person name="Giglione C."/>
        </authorList>
    </citation>
    <scope>ACETYLATION [LARGE SCALE ANALYSIS] AT ALA-2</scope>
    <scope>CLEAVAGE OF INITIATOR METHIONINE [LARGE SCALE ANALYSIS]</scope>
    <scope>IDENTIFICATION BY MASS SPECTROMETRY [LARGE SCALE ANALYSIS]</scope>
</reference>
<reference key="12">
    <citation type="journal article" date="2023" name="Plant Cell">
        <title>An updated nomenclature for plant ribosomal protein genes.</title>
        <authorList>
            <person name="Scarpin M.R."/>
            <person name="Busche M."/>
            <person name="Martinez R.E."/>
            <person name="Harper L.C."/>
            <person name="Reiser L."/>
            <person name="Szakonyi D."/>
            <person name="Merchante C."/>
            <person name="Lan T."/>
            <person name="Xiong W."/>
            <person name="Mo B."/>
            <person name="Tang G."/>
            <person name="Chen X."/>
            <person name="Bailey-Serres J."/>
            <person name="Browning K.S."/>
            <person name="Brunkard J.O."/>
        </authorList>
    </citation>
    <scope>NOMENCLATURE</scope>
</reference>
<name>RSSA1_ARATH</name>
<protein>
    <recommendedName>
        <fullName evidence="3">Small ribosomal subunit protein uS2z</fullName>
    </recommendedName>
    <alternativeName>
        <fullName>40S ribosomal protein Sa-1</fullName>
    </alternativeName>
    <alternativeName>
        <fullName>Laminin receptor homolog</fullName>
    </alternativeName>
    <alternativeName>
        <fullName>p40</fullName>
    </alternativeName>
</protein>
<evidence type="ECO:0000255" key="1">
    <source>
        <dbReference type="HAMAP-Rule" id="MF_03015"/>
    </source>
</evidence>
<evidence type="ECO:0000256" key="2">
    <source>
        <dbReference type="SAM" id="MobiDB-lite"/>
    </source>
</evidence>
<evidence type="ECO:0000303" key="3">
    <source>
    </source>
</evidence>
<evidence type="ECO:0000305" key="4"/>
<evidence type="ECO:0007744" key="5">
    <source>
    </source>
</evidence>
<accession>Q08682</accession>
<accession>Q93V81</accession>
<keyword id="KW-0007">Acetylation</keyword>
<keyword id="KW-0025">Alternative splicing</keyword>
<keyword id="KW-0963">Cytoplasm</keyword>
<keyword id="KW-1185">Reference proteome</keyword>
<keyword id="KW-0687">Ribonucleoprotein</keyword>
<keyword id="KW-0689">Ribosomal protein</keyword>
<dbReference type="EMBL" id="X69056">
    <property type="protein sequence ID" value="CAA48794.1"/>
    <property type="molecule type" value="mRNA"/>
</dbReference>
<dbReference type="EMBL" id="U01955">
    <property type="protein sequence ID" value="AAA53425.1"/>
    <property type="molecule type" value="mRNA"/>
</dbReference>
<dbReference type="EMBL" id="X89366">
    <property type="protein sequence ID" value="CAA61547.1"/>
    <property type="molecule type" value="Genomic_DNA"/>
</dbReference>
<dbReference type="EMBL" id="Y10379">
    <property type="protein sequence ID" value="CAA71407.1"/>
    <property type="molecule type" value="Genomic_DNA"/>
</dbReference>
<dbReference type="EMBL" id="AC016529">
    <property type="protein sequence ID" value="AAG52587.1"/>
    <property type="molecule type" value="Genomic_DNA"/>
</dbReference>
<dbReference type="EMBL" id="CP002684">
    <property type="protein sequence ID" value="AEE35313.1"/>
    <property type="molecule type" value="Genomic_DNA"/>
</dbReference>
<dbReference type="EMBL" id="AY054211">
    <property type="protein sequence ID" value="AAL06872.1"/>
    <property type="molecule type" value="mRNA"/>
</dbReference>
<dbReference type="EMBL" id="AY058885">
    <property type="protein sequence ID" value="AAL24271.1"/>
    <property type="molecule type" value="mRNA"/>
</dbReference>
<dbReference type="EMBL" id="AY065096">
    <property type="protein sequence ID" value="AAL38272.1"/>
    <property type="molecule type" value="mRNA"/>
</dbReference>
<dbReference type="EMBL" id="AY079041">
    <property type="protein sequence ID" value="AAL79591.1"/>
    <property type="molecule type" value="mRNA"/>
</dbReference>
<dbReference type="EMBL" id="AY114561">
    <property type="protein sequence ID" value="AAM47880.1"/>
    <property type="molecule type" value="mRNA"/>
</dbReference>
<dbReference type="EMBL" id="AY136324">
    <property type="protein sequence ID" value="AAM96990.1"/>
    <property type="molecule type" value="mRNA"/>
</dbReference>
<dbReference type="EMBL" id="BT000421">
    <property type="protein sequence ID" value="AAN15740.1"/>
    <property type="molecule type" value="mRNA"/>
</dbReference>
<dbReference type="EMBL" id="AY087976">
    <property type="protein sequence ID" value="AAM65523.1"/>
    <property type="molecule type" value="mRNA"/>
</dbReference>
<dbReference type="PIR" id="F96747">
    <property type="entry name" value="F96747"/>
</dbReference>
<dbReference type="PIR" id="S71247">
    <property type="entry name" value="S71247"/>
</dbReference>
<dbReference type="RefSeq" id="NP_177381.1">
    <molecule id="Q08682-1"/>
    <property type="nucleotide sequence ID" value="NM_105896.4"/>
</dbReference>
<dbReference type="SMR" id="Q08682"/>
<dbReference type="BioGRID" id="28789">
    <property type="interactions" value="10"/>
</dbReference>
<dbReference type="FunCoup" id="Q08682">
    <property type="interactions" value="3299"/>
</dbReference>
<dbReference type="IntAct" id="Q08682">
    <property type="interactions" value="2"/>
</dbReference>
<dbReference type="MINT" id="Q08682"/>
<dbReference type="STRING" id="3702.Q08682"/>
<dbReference type="iPTMnet" id="Q08682"/>
<dbReference type="MetOSite" id="Q08682"/>
<dbReference type="PaxDb" id="3702-AT1G72370.1"/>
<dbReference type="EnsemblPlants" id="AT1G72370.1">
    <molecule id="Q08682-1"/>
    <property type="protein sequence ID" value="AT1G72370.1"/>
    <property type="gene ID" value="AT1G72370"/>
</dbReference>
<dbReference type="GeneID" id="843569"/>
<dbReference type="Gramene" id="AT1G72370.1">
    <molecule id="Q08682-1"/>
    <property type="protein sequence ID" value="AT1G72370.1"/>
    <property type="gene ID" value="AT1G72370"/>
</dbReference>
<dbReference type="KEGG" id="ath:AT1G72370"/>
<dbReference type="Araport" id="AT1G72370"/>
<dbReference type="TAIR" id="AT1G72370">
    <property type="gene designation" value="P40"/>
</dbReference>
<dbReference type="eggNOG" id="KOG0830">
    <property type="taxonomic scope" value="Eukaryota"/>
</dbReference>
<dbReference type="InParanoid" id="Q08682"/>
<dbReference type="OMA" id="QTSYNEP"/>
<dbReference type="OrthoDB" id="414863at2759"/>
<dbReference type="PhylomeDB" id="Q08682"/>
<dbReference type="CD-CODE" id="4299E36E">
    <property type="entry name" value="Nucleolus"/>
</dbReference>
<dbReference type="PRO" id="PR:Q08682"/>
<dbReference type="Proteomes" id="UP000006548">
    <property type="component" value="Chromosome 1"/>
</dbReference>
<dbReference type="ExpressionAtlas" id="Q08682">
    <property type="expression patterns" value="baseline and differential"/>
</dbReference>
<dbReference type="GO" id="GO:0009507">
    <property type="term" value="C:chloroplast"/>
    <property type="evidence" value="ECO:0007005"/>
    <property type="project" value="TAIR"/>
</dbReference>
<dbReference type="GO" id="GO:0005737">
    <property type="term" value="C:cytoplasm"/>
    <property type="evidence" value="ECO:0000314"/>
    <property type="project" value="TAIR"/>
</dbReference>
<dbReference type="GO" id="GO:0022626">
    <property type="term" value="C:cytosolic ribosome"/>
    <property type="evidence" value="ECO:0007005"/>
    <property type="project" value="TAIR"/>
</dbReference>
<dbReference type="GO" id="GO:0022627">
    <property type="term" value="C:cytosolic small ribosomal subunit"/>
    <property type="evidence" value="ECO:0007005"/>
    <property type="project" value="TAIR"/>
</dbReference>
<dbReference type="GO" id="GO:0005634">
    <property type="term" value="C:nucleus"/>
    <property type="evidence" value="ECO:0007005"/>
    <property type="project" value="TAIR"/>
</dbReference>
<dbReference type="GO" id="GO:0009506">
    <property type="term" value="C:plasmodesma"/>
    <property type="evidence" value="ECO:0007005"/>
    <property type="project" value="TAIR"/>
</dbReference>
<dbReference type="GO" id="GO:0015935">
    <property type="term" value="C:small ribosomal subunit"/>
    <property type="evidence" value="ECO:0000314"/>
    <property type="project" value="TAIR"/>
</dbReference>
<dbReference type="GO" id="GO:0003729">
    <property type="term" value="F:mRNA binding"/>
    <property type="evidence" value="ECO:0000314"/>
    <property type="project" value="TAIR"/>
</dbReference>
<dbReference type="GO" id="GO:0003735">
    <property type="term" value="F:structural constituent of ribosome"/>
    <property type="evidence" value="ECO:0000314"/>
    <property type="project" value="CAFA"/>
</dbReference>
<dbReference type="GO" id="GO:0006970">
    <property type="term" value="P:response to osmotic stress"/>
    <property type="evidence" value="ECO:0000270"/>
    <property type="project" value="TAIR"/>
</dbReference>
<dbReference type="GO" id="GO:0009651">
    <property type="term" value="P:response to salt stress"/>
    <property type="evidence" value="ECO:0000270"/>
    <property type="project" value="TAIR"/>
</dbReference>
<dbReference type="GO" id="GO:0000028">
    <property type="term" value="P:ribosomal small subunit assembly"/>
    <property type="evidence" value="ECO:0007669"/>
    <property type="project" value="UniProtKB-UniRule"/>
</dbReference>
<dbReference type="GO" id="GO:0006412">
    <property type="term" value="P:translation"/>
    <property type="evidence" value="ECO:0007669"/>
    <property type="project" value="UniProtKB-UniRule"/>
</dbReference>
<dbReference type="CDD" id="cd01425">
    <property type="entry name" value="RPS2"/>
    <property type="match status" value="1"/>
</dbReference>
<dbReference type="FunFam" id="3.40.50.10490:FF:000017">
    <property type="entry name" value="40S ribosomal protein SA"/>
    <property type="match status" value="1"/>
</dbReference>
<dbReference type="Gene3D" id="3.40.50.10490">
    <property type="entry name" value="Glucose-6-phosphate isomerase like protein, domain 1"/>
    <property type="match status" value="1"/>
</dbReference>
<dbReference type="HAMAP" id="MF_03015">
    <property type="entry name" value="Ribosomal_S2_euk"/>
    <property type="match status" value="1"/>
</dbReference>
<dbReference type="InterPro" id="IPR001865">
    <property type="entry name" value="Ribosomal_uS2"/>
</dbReference>
<dbReference type="InterPro" id="IPR018130">
    <property type="entry name" value="Ribosomal_uS2_CS"/>
</dbReference>
<dbReference type="InterPro" id="IPR027498">
    <property type="entry name" value="Ribosomal_uS2_euk"/>
</dbReference>
<dbReference type="InterPro" id="IPR005707">
    <property type="entry name" value="Ribosomal_uS2_euk/arc"/>
</dbReference>
<dbReference type="InterPro" id="IPR023591">
    <property type="entry name" value="Ribosomal_uS2_flav_dom_sf"/>
</dbReference>
<dbReference type="NCBIfam" id="TIGR01012">
    <property type="entry name" value="uS2_euk_arch"/>
    <property type="match status" value="1"/>
</dbReference>
<dbReference type="PANTHER" id="PTHR11489">
    <property type="entry name" value="40S RIBOSOMAL PROTEIN SA"/>
    <property type="match status" value="1"/>
</dbReference>
<dbReference type="Pfam" id="PF00318">
    <property type="entry name" value="Ribosomal_S2"/>
    <property type="match status" value="2"/>
</dbReference>
<dbReference type="PRINTS" id="PR00395">
    <property type="entry name" value="RIBOSOMALS2"/>
</dbReference>
<dbReference type="SUPFAM" id="SSF52313">
    <property type="entry name" value="Ribosomal protein S2"/>
    <property type="match status" value="1"/>
</dbReference>
<dbReference type="PROSITE" id="PS00962">
    <property type="entry name" value="RIBOSOMAL_S2_1"/>
    <property type="match status" value="1"/>
</dbReference>
<dbReference type="PROSITE" id="PS00963">
    <property type="entry name" value="RIBOSOMAL_S2_2"/>
    <property type="match status" value="1"/>
</dbReference>
<comment type="function">
    <text evidence="1">Required for the assembly and/or stability of the 40S ribosomal subunit. Required for the processing of the 20S rRNA-precursor to mature 18S rRNA in a late step of the maturation of 40S ribosomal subunits.</text>
</comment>
<comment type="subunit">
    <text evidence="1">Component of the small ribosomal subunit. Mature ribosomes consist of a small (40S) and a large (60S) subunit. The 40S subunit contains about 33 different proteins and 1 molecule of RNA (18S). The 60S subunit contains about 49 different proteins and 3 molecules of RNA (25S, 5.8S and 5S). Interacts with ribosomal protein S21.</text>
</comment>
<comment type="subcellular location">
    <subcellularLocation>
        <location>Cytoplasm</location>
    </subcellularLocation>
</comment>
<comment type="alternative products">
    <event type="alternative splicing"/>
    <isoform>
        <id>Q08682-1</id>
        <name>1</name>
        <sequence type="displayed"/>
    </isoform>
    <text>A number of isoforms are produced. According to EST sequences.</text>
</comment>
<comment type="similarity">
    <text evidence="1">Belongs to the universal ribosomal protein uS2 family.</text>
</comment>
<comment type="caution">
    <text evidence="4">Was originally thought to be a laminin receptor.</text>
</comment>
<sequence length="298" mass="32291">MATNGSASSAQLSQKEADVRMMCAAEVHLGTKNCNYQMERYVFKRRNDGIYIFNLGKTWEKLQMAARVIVAIENPQDIIVQSARPYGQRAVLKFAQYTGANAIAGRHTPGTFTNQMQTSFSEPRLLILTDPRTDHQPIKEGALGNIPIIAFCDTDSPMRFVDIGIPANNKGKHSIGCLFWLLARMVLQMRGTIAAGQKWDVMVDLFFYREPEETKPEDEDEAGPQAEYGALPAPEYGMVGGDQWTTAQIPDAAWPGEGQAPISAAPAAASWSDSAAAPADGGWEAAAPPSGAPAAGWE</sequence>